<evidence type="ECO:0000255" key="1">
    <source>
        <dbReference type="HAMAP-Rule" id="MF_00044"/>
    </source>
</evidence>
<sequence length="591" mass="66348">MAERTHACGKVTVEAVGQTVQLKGWVQKRRDLGGLIFIDLRDRTGIVQVVFNPETSKEALEVAETIRSEYVLHVEGTVVERGEGAINDNMATGRIEVQATKVNVLNAAKTTPIIIADDTDASEDVRLKYRYLDLRRPVMFNTFKMRHDVTKTIRNFLDTEEFLEVETPILTKSTPEGARDYLVPSRVHDGEFYALPQSPQLFKQLLMVGGFERYYQVARCFRDEDLRADRQPEFTQIDIEASFLTQDEILDMMERMMTKVMKDAKGVEVSAPFPRMKYADAMARYGSDKPDTRFEMELTDLSEFAAGCGFKVFTSAVESGGQVKAINAKGAASKYSRKDIDALTEFVKVYGAKGLAWLKVEEDGLKGPIAKFFGEEDANVLMNTLEATAGDLLLFVADKKSVVADSLGALRLRLGKELELIDESKFNFLWVTDWPLLEYDEDADRYFAAHHPFTMPFREDVELLETAPEKARAQAYDLVLNGYELGGGSLRIYERDVQEKMFKALGFSQEEAQEQFGFLLEAFEYGTPPHGGIALGLDRLVMLLAGRTNLRDTIAFPKTASASCLLTEAPSPVAEAQLEELNLKLNVKEEK</sequence>
<comment type="function">
    <text evidence="1">Aspartyl-tRNA synthetase with relaxed tRNA specificity since it is able to aspartylate not only its cognate tRNA(Asp) but also tRNA(Asn). Reaction proceeds in two steps: L-aspartate is first activated by ATP to form Asp-AMP and then transferred to the acceptor end of tRNA(Asp/Asn).</text>
</comment>
<comment type="catalytic activity">
    <reaction evidence="1">
        <text>tRNA(Asx) + L-aspartate + ATP = L-aspartyl-tRNA(Asx) + AMP + diphosphate</text>
        <dbReference type="Rhea" id="RHEA:18349"/>
        <dbReference type="Rhea" id="RHEA-COMP:9710"/>
        <dbReference type="Rhea" id="RHEA-COMP:9711"/>
        <dbReference type="ChEBI" id="CHEBI:29991"/>
        <dbReference type="ChEBI" id="CHEBI:30616"/>
        <dbReference type="ChEBI" id="CHEBI:33019"/>
        <dbReference type="ChEBI" id="CHEBI:78442"/>
        <dbReference type="ChEBI" id="CHEBI:78516"/>
        <dbReference type="ChEBI" id="CHEBI:456215"/>
        <dbReference type="EC" id="6.1.1.23"/>
    </reaction>
</comment>
<comment type="subunit">
    <text evidence="1">Homodimer.</text>
</comment>
<comment type="subcellular location">
    <subcellularLocation>
        <location evidence="1">Cytoplasm</location>
    </subcellularLocation>
</comment>
<comment type="similarity">
    <text evidence="1">Belongs to the class-II aminoacyl-tRNA synthetase family. Type 1 subfamily.</text>
</comment>
<reference key="1">
    <citation type="submission" date="2008-10" db="EMBL/GenBank/DDBJ databases">
        <title>Genome sequence of Bacillus cereus AH820.</title>
        <authorList>
            <person name="Dodson R.J."/>
            <person name="Durkin A.S."/>
            <person name="Rosovitz M.J."/>
            <person name="Rasko D.A."/>
            <person name="Hoffmaster A."/>
            <person name="Ravel J."/>
            <person name="Sutton G."/>
        </authorList>
    </citation>
    <scope>NUCLEOTIDE SEQUENCE [LARGE SCALE GENOMIC DNA]</scope>
    <source>
        <strain>AH820</strain>
    </source>
</reference>
<dbReference type="EC" id="6.1.1.23" evidence="1"/>
<dbReference type="EMBL" id="CP001283">
    <property type="protein sequence ID" value="ACK88003.1"/>
    <property type="molecule type" value="Genomic_DNA"/>
</dbReference>
<dbReference type="RefSeq" id="WP_000840895.1">
    <property type="nucleotide sequence ID" value="NC_011773.1"/>
</dbReference>
<dbReference type="SMR" id="B7JPY8"/>
<dbReference type="KEGG" id="bcu:BCAH820_4482"/>
<dbReference type="HOGENOM" id="CLU_014330_3_2_9"/>
<dbReference type="Proteomes" id="UP000001363">
    <property type="component" value="Chromosome"/>
</dbReference>
<dbReference type="GO" id="GO:0005737">
    <property type="term" value="C:cytoplasm"/>
    <property type="evidence" value="ECO:0007669"/>
    <property type="project" value="UniProtKB-SubCell"/>
</dbReference>
<dbReference type="GO" id="GO:0004815">
    <property type="term" value="F:aspartate-tRNA ligase activity"/>
    <property type="evidence" value="ECO:0007669"/>
    <property type="project" value="UniProtKB-UniRule"/>
</dbReference>
<dbReference type="GO" id="GO:0050560">
    <property type="term" value="F:aspartate-tRNA(Asn) ligase activity"/>
    <property type="evidence" value="ECO:0007669"/>
    <property type="project" value="UniProtKB-EC"/>
</dbReference>
<dbReference type="GO" id="GO:0005524">
    <property type="term" value="F:ATP binding"/>
    <property type="evidence" value="ECO:0007669"/>
    <property type="project" value="UniProtKB-UniRule"/>
</dbReference>
<dbReference type="GO" id="GO:0140096">
    <property type="term" value="F:catalytic activity, acting on a protein"/>
    <property type="evidence" value="ECO:0007669"/>
    <property type="project" value="UniProtKB-ARBA"/>
</dbReference>
<dbReference type="GO" id="GO:0003676">
    <property type="term" value="F:nucleic acid binding"/>
    <property type="evidence" value="ECO:0007669"/>
    <property type="project" value="InterPro"/>
</dbReference>
<dbReference type="GO" id="GO:0016740">
    <property type="term" value="F:transferase activity"/>
    <property type="evidence" value="ECO:0007669"/>
    <property type="project" value="UniProtKB-ARBA"/>
</dbReference>
<dbReference type="GO" id="GO:0006422">
    <property type="term" value="P:aspartyl-tRNA aminoacylation"/>
    <property type="evidence" value="ECO:0007669"/>
    <property type="project" value="UniProtKB-UniRule"/>
</dbReference>
<dbReference type="CDD" id="cd00777">
    <property type="entry name" value="AspRS_core"/>
    <property type="match status" value="1"/>
</dbReference>
<dbReference type="CDD" id="cd04317">
    <property type="entry name" value="EcAspRS_like_N"/>
    <property type="match status" value="1"/>
</dbReference>
<dbReference type="Gene3D" id="3.30.930.10">
    <property type="entry name" value="Bira Bifunctional Protein, Domain 2"/>
    <property type="match status" value="1"/>
</dbReference>
<dbReference type="Gene3D" id="3.30.1360.30">
    <property type="entry name" value="GAD-like domain"/>
    <property type="match status" value="1"/>
</dbReference>
<dbReference type="Gene3D" id="2.40.50.140">
    <property type="entry name" value="Nucleic acid-binding proteins"/>
    <property type="match status" value="1"/>
</dbReference>
<dbReference type="HAMAP" id="MF_00044">
    <property type="entry name" value="Asp_tRNA_synth_type1"/>
    <property type="match status" value="1"/>
</dbReference>
<dbReference type="InterPro" id="IPR004364">
    <property type="entry name" value="Aa-tRNA-synt_II"/>
</dbReference>
<dbReference type="InterPro" id="IPR006195">
    <property type="entry name" value="aa-tRNA-synth_II"/>
</dbReference>
<dbReference type="InterPro" id="IPR045864">
    <property type="entry name" value="aa-tRNA-synth_II/BPL/LPL"/>
</dbReference>
<dbReference type="InterPro" id="IPR004524">
    <property type="entry name" value="Asp-tRNA-ligase_1"/>
</dbReference>
<dbReference type="InterPro" id="IPR047089">
    <property type="entry name" value="Asp-tRNA-ligase_1_N"/>
</dbReference>
<dbReference type="InterPro" id="IPR002312">
    <property type="entry name" value="Asp/Asn-tRNA-synth_IIb"/>
</dbReference>
<dbReference type="InterPro" id="IPR047090">
    <property type="entry name" value="AspRS_core"/>
</dbReference>
<dbReference type="InterPro" id="IPR004115">
    <property type="entry name" value="GAD-like_sf"/>
</dbReference>
<dbReference type="InterPro" id="IPR029351">
    <property type="entry name" value="GAD_dom"/>
</dbReference>
<dbReference type="InterPro" id="IPR012340">
    <property type="entry name" value="NA-bd_OB-fold"/>
</dbReference>
<dbReference type="InterPro" id="IPR004365">
    <property type="entry name" value="NA-bd_OB_tRNA"/>
</dbReference>
<dbReference type="NCBIfam" id="TIGR00459">
    <property type="entry name" value="aspS_bact"/>
    <property type="match status" value="1"/>
</dbReference>
<dbReference type="NCBIfam" id="NF001750">
    <property type="entry name" value="PRK00476.1"/>
    <property type="match status" value="1"/>
</dbReference>
<dbReference type="PANTHER" id="PTHR22594:SF5">
    <property type="entry name" value="ASPARTATE--TRNA LIGASE, MITOCHONDRIAL"/>
    <property type="match status" value="1"/>
</dbReference>
<dbReference type="PANTHER" id="PTHR22594">
    <property type="entry name" value="ASPARTYL/LYSYL-TRNA SYNTHETASE"/>
    <property type="match status" value="1"/>
</dbReference>
<dbReference type="Pfam" id="PF02938">
    <property type="entry name" value="GAD"/>
    <property type="match status" value="1"/>
</dbReference>
<dbReference type="Pfam" id="PF00152">
    <property type="entry name" value="tRNA-synt_2"/>
    <property type="match status" value="1"/>
</dbReference>
<dbReference type="Pfam" id="PF01336">
    <property type="entry name" value="tRNA_anti-codon"/>
    <property type="match status" value="1"/>
</dbReference>
<dbReference type="PRINTS" id="PR01042">
    <property type="entry name" value="TRNASYNTHASP"/>
</dbReference>
<dbReference type="SUPFAM" id="SSF55681">
    <property type="entry name" value="Class II aaRS and biotin synthetases"/>
    <property type="match status" value="1"/>
</dbReference>
<dbReference type="SUPFAM" id="SSF55261">
    <property type="entry name" value="GAD domain-like"/>
    <property type="match status" value="1"/>
</dbReference>
<dbReference type="SUPFAM" id="SSF50249">
    <property type="entry name" value="Nucleic acid-binding proteins"/>
    <property type="match status" value="1"/>
</dbReference>
<dbReference type="PROSITE" id="PS50862">
    <property type="entry name" value="AA_TRNA_LIGASE_II"/>
    <property type="match status" value="1"/>
</dbReference>
<feature type="chain" id="PRO_1000198958" description="Aspartate--tRNA(Asp/Asn) ligase">
    <location>
        <begin position="1"/>
        <end position="591"/>
    </location>
</feature>
<feature type="region of interest" description="Aspartate" evidence="1">
    <location>
        <begin position="200"/>
        <end position="203"/>
    </location>
</feature>
<feature type="binding site" evidence="1">
    <location>
        <position position="176"/>
    </location>
    <ligand>
        <name>L-aspartate</name>
        <dbReference type="ChEBI" id="CHEBI:29991"/>
    </ligand>
</feature>
<feature type="binding site" evidence="1">
    <location>
        <begin position="222"/>
        <end position="224"/>
    </location>
    <ligand>
        <name>ATP</name>
        <dbReference type="ChEBI" id="CHEBI:30616"/>
    </ligand>
</feature>
<feature type="binding site" evidence="1">
    <location>
        <position position="222"/>
    </location>
    <ligand>
        <name>L-aspartate</name>
        <dbReference type="ChEBI" id="CHEBI:29991"/>
    </ligand>
</feature>
<feature type="binding site" evidence="1">
    <location>
        <position position="231"/>
    </location>
    <ligand>
        <name>ATP</name>
        <dbReference type="ChEBI" id="CHEBI:30616"/>
    </ligand>
</feature>
<feature type="binding site" evidence="1">
    <location>
        <position position="450"/>
    </location>
    <ligand>
        <name>L-aspartate</name>
        <dbReference type="ChEBI" id="CHEBI:29991"/>
    </ligand>
</feature>
<feature type="binding site" evidence="1">
    <location>
        <position position="484"/>
    </location>
    <ligand>
        <name>ATP</name>
        <dbReference type="ChEBI" id="CHEBI:30616"/>
    </ligand>
</feature>
<feature type="binding site" evidence="1">
    <location>
        <position position="491"/>
    </location>
    <ligand>
        <name>L-aspartate</name>
        <dbReference type="ChEBI" id="CHEBI:29991"/>
    </ligand>
</feature>
<feature type="binding site" evidence="1">
    <location>
        <begin position="536"/>
        <end position="539"/>
    </location>
    <ligand>
        <name>ATP</name>
        <dbReference type="ChEBI" id="CHEBI:30616"/>
    </ligand>
</feature>
<feature type="site" description="Important for tRNA non-discrimination" evidence="1">
    <location>
        <position position="84"/>
    </location>
</feature>
<name>SYDND_BACC0</name>
<protein>
    <recommendedName>
        <fullName evidence="1">Aspartate--tRNA(Asp/Asn) ligase</fullName>
        <ecNumber evidence="1">6.1.1.23</ecNumber>
    </recommendedName>
    <alternativeName>
        <fullName evidence="1">Aspartyl-tRNA synthetase</fullName>
        <shortName evidence="1">AspRS</shortName>
    </alternativeName>
    <alternativeName>
        <fullName evidence="1">Non-discriminating aspartyl-tRNA synthetase</fullName>
        <shortName evidence="1">ND-AspRS</shortName>
    </alternativeName>
</protein>
<keyword id="KW-0030">Aminoacyl-tRNA synthetase</keyword>
<keyword id="KW-0067">ATP-binding</keyword>
<keyword id="KW-0963">Cytoplasm</keyword>
<keyword id="KW-0436">Ligase</keyword>
<keyword id="KW-0547">Nucleotide-binding</keyword>
<keyword id="KW-0648">Protein biosynthesis</keyword>
<accession>B7JPY8</accession>
<organism>
    <name type="scientific">Bacillus cereus (strain AH820)</name>
    <dbReference type="NCBI Taxonomy" id="405535"/>
    <lineage>
        <taxon>Bacteria</taxon>
        <taxon>Bacillati</taxon>
        <taxon>Bacillota</taxon>
        <taxon>Bacilli</taxon>
        <taxon>Bacillales</taxon>
        <taxon>Bacillaceae</taxon>
        <taxon>Bacillus</taxon>
        <taxon>Bacillus cereus group</taxon>
    </lineage>
</organism>
<gene>
    <name evidence="1" type="primary">aspS</name>
    <name type="ordered locus">BCAH820_4482</name>
</gene>
<proteinExistence type="inferred from homology"/>